<accession>A4TFB8</accession>
<keyword id="KW-0028">Amino-acid biosynthesis</keyword>
<keyword id="KW-0057">Aromatic amino acid biosynthesis</keyword>
<keyword id="KW-0963">Cytoplasm</keyword>
<keyword id="KW-0808">Transferase</keyword>
<name>AROA_MYCGI</name>
<sequence>MVGVSNWAAPSTATPVHATVTVPGSKSQTNRALVLAALAAREGSSRISGALRSRDTDLMIGALETLGLSVAASDSDPADLTVSGTLAPAAEARVDCGLAGTVLRFVPPIAALSAQTVTFDGDEQARSRPIAPLLDGLRTLGVDIDGDGLPFAVRGTGTVAGGTVEIDASGSSQFVSGLLLSGAAFTDGLTIVHTGDSVPSAPHIAMTVSMLRDAGVEVDDSAPDRWRVSPGPIGARDWVIEPDLSNSVPFLAAAVVSGGAVRITGWPTVSIQPADTILKILAGLNGEVRKGSSYLEVQGATNYGGIDVDLRDVGELAPSVAAMAALADPGSVSRLRGIAHLRGHETDRLAALSTEINGIGGQCEETEDGLVITAREMHGGTWSSYADHRMATAGAIIGLRVPGIEVEDIGTTAKTLPDFPQLWADMLGGQTDDLQQGPSARETPGR</sequence>
<dbReference type="EC" id="2.5.1.19" evidence="1"/>
<dbReference type="EMBL" id="CP000656">
    <property type="protein sequence ID" value="ABP47163.1"/>
    <property type="molecule type" value="Genomic_DNA"/>
</dbReference>
<dbReference type="SMR" id="A4TFB8"/>
<dbReference type="STRING" id="350054.Mflv_4695"/>
<dbReference type="KEGG" id="mgi:Mflv_4695"/>
<dbReference type="eggNOG" id="COG0128">
    <property type="taxonomic scope" value="Bacteria"/>
</dbReference>
<dbReference type="HOGENOM" id="CLU_024321_0_0_11"/>
<dbReference type="OrthoDB" id="9809920at2"/>
<dbReference type="UniPathway" id="UPA00053">
    <property type="reaction ID" value="UER00089"/>
</dbReference>
<dbReference type="GO" id="GO:0005737">
    <property type="term" value="C:cytoplasm"/>
    <property type="evidence" value="ECO:0007669"/>
    <property type="project" value="UniProtKB-SubCell"/>
</dbReference>
<dbReference type="GO" id="GO:0003866">
    <property type="term" value="F:3-phosphoshikimate 1-carboxyvinyltransferase activity"/>
    <property type="evidence" value="ECO:0007669"/>
    <property type="project" value="UniProtKB-UniRule"/>
</dbReference>
<dbReference type="GO" id="GO:0008652">
    <property type="term" value="P:amino acid biosynthetic process"/>
    <property type="evidence" value="ECO:0007669"/>
    <property type="project" value="UniProtKB-KW"/>
</dbReference>
<dbReference type="GO" id="GO:0009073">
    <property type="term" value="P:aromatic amino acid family biosynthetic process"/>
    <property type="evidence" value="ECO:0007669"/>
    <property type="project" value="UniProtKB-KW"/>
</dbReference>
<dbReference type="GO" id="GO:0009423">
    <property type="term" value="P:chorismate biosynthetic process"/>
    <property type="evidence" value="ECO:0007669"/>
    <property type="project" value="UniProtKB-UniRule"/>
</dbReference>
<dbReference type="CDD" id="cd01556">
    <property type="entry name" value="EPSP_synthase"/>
    <property type="match status" value="1"/>
</dbReference>
<dbReference type="FunFam" id="3.65.10.10:FF:000010">
    <property type="entry name" value="3-phosphoshikimate 1-carboxyvinyltransferase"/>
    <property type="match status" value="1"/>
</dbReference>
<dbReference type="FunFam" id="3.65.10.10:FF:000011">
    <property type="entry name" value="3-phosphoshikimate 1-carboxyvinyltransferase"/>
    <property type="match status" value="1"/>
</dbReference>
<dbReference type="Gene3D" id="3.65.10.10">
    <property type="entry name" value="Enolpyruvate transferase domain"/>
    <property type="match status" value="2"/>
</dbReference>
<dbReference type="HAMAP" id="MF_00210">
    <property type="entry name" value="EPSP_synth"/>
    <property type="match status" value="1"/>
</dbReference>
<dbReference type="InterPro" id="IPR001986">
    <property type="entry name" value="Enolpyruvate_Tfrase_dom"/>
</dbReference>
<dbReference type="InterPro" id="IPR036968">
    <property type="entry name" value="Enolpyruvate_Tfrase_sf"/>
</dbReference>
<dbReference type="InterPro" id="IPR006264">
    <property type="entry name" value="EPSP_synthase"/>
</dbReference>
<dbReference type="InterPro" id="IPR023193">
    <property type="entry name" value="EPSP_synthase_CS"/>
</dbReference>
<dbReference type="InterPro" id="IPR013792">
    <property type="entry name" value="RNA3'P_cycl/enolpyr_Trfase_a/b"/>
</dbReference>
<dbReference type="NCBIfam" id="TIGR01356">
    <property type="entry name" value="aroA"/>
    <property type="match status" value="1"/>
</dbReference>
<dbReference type="PANTHER" id="PTHR21090">
    <property type="entry name" value="AROM/DEHYDROQUINATE SYNTHASE"/>
    <property type="match status" value="1"/>
</dbReference>
<dbReference type="PANTHER" id="PTHR21090:SF5">
    <property type="entry name" value="PENTAFUNCTIONAL AROM POLYPEPTIDE"/>
    <property type="match status" value="1"/>
</dbReference>
<dbReference type="Pfam" id="PF00275">
    <property type="entry name" value="EPSP_synthase"/>
    <property type="match status" value="1"/>
</dbReference>
<dbReference type="PIRSF" id="PIRSF000505">
    <property type="entry name" value="EPSPS"/>
    <property type="match status" value="1"/>
</dbReference>
<dbReference type="SUPFAM" id="SSF55205">
    <property type="entry name" value="EPT/RTPC-like"/>
    <property type="match status" value="1"/>
</dbReference>
<dbReference type="PROSITE" id="PS00104">
    <property type="entry name" value="EPSP_SYNTHASE_1"/>
    <property type="match status" value="1"/>
</dbReference>
<dbReference type="PROSITE" id="PS00885">
    <property type="entry name" value="EPSP_SYNTHASE_2"/>
    <property type="match status" value="1"/>
</dbReference>
<comment type="function">
    <text evidence="1">Catalyzes the transfer of the enolpyruvyl moiety of phosphoenolpyruvate (PEP) to the 5-hydroxyl of shikimate-3-phosphate (S3P) to produce enolpyruvyl shikimate-3-phosphate and inorganic phosphate.</text>
</comment>
<comment type="catalytic activity">
    <reaction evidence="1">
        <text>3-phosphoshikimate + phosphoenolpyruvate = 5-O-(1-carboxyvinyl)-3-phosphoshikimate + phosphate</text>
        <dbReference type="Rhea" id="RHEA:21256"/>
        <dbReference type="ChEBI" id="CHEBI:43474"/>
        <dbReference type="ChEBI" id="CHEBI:57701"/>
        <dbReference type="ChEBI" id="CHEBI:58702"/>
        <dbReference type="ChEBI" id="CHEBI:145989"/>
        <dbReference type="EC" id="2.5.1.19"/>
    </reaction>
    <physiologicalReaction direction="left-to-right" evidence="1">
        <dbReference type="Rhea" id="RHEA:21257"/>
    </physiologicalReaction>
</comment>
<comment type="pathway">
    <text evidence="1">Metabolic intermediate biosynthesis; chorismate biosynthesis; chorismate from D-erythrose 4-phosphate and phosphoenolpyruvate: step 6/7.</text>
</comment>
<comment type="subunit">
    <text evidence="1">Monomer.</text>
</comment>
<comment type="subcellular location">
    <subcellularLocation>
        <location evidence="1">Cytoplasm</location>
    </subcellularLocation>
</comment>
<comment type="similarity">
    <text evidence="1">Belongs to the EPSP synthase family.</text>
</comment>
<evidence type="ECO:0000255" key="1">
    <source>
        <dbReference type="HAMAP-Rule" id="MF_00210"/>
    </source>
</evidence>
<protein>
    <recommendedName>
        <fullName evidence="1">3-phosphoshikimate 1-carboxyvinyltransferase</fullName>
        <ecNumber evidence="1">2.5.1.19</ecNumber>
    </recommendedName>
    <alternativeName>
        <fullName evidence="1">5-enolpyruvylshikimate-3-phosphate synthase</fullName>
        <shortName evidence="1">EPSP synthase</shortName>
        <shortName evidence="1">EPSPS</shortName>
    </alternativeName>
</protein>
<reference key="1">
    <citation type="submission" date="2007-04" db="EMBL/GenBank/DDBJ databases">
        <title>Complete sequence of chromosome of Mycobacterium gilvum PYR-GCK.</title>
        <authorList>
            <consortium name="US DOE Joint Genome Institute"/>
            <person name="Copeland A."/>
            <person name="Lucas S."/>
            <person name="Lapidus A."/>
            <person name="Barry K."/>
            <person name="Detter J.C."/>
            <person name="Glavina del Rio T."/>
            <person name="Hammon N."/>
            <person name="Israni S."/>
            <person name="Dalin E."/>
            <person name="Tice H."/>
            <person name="Pitluck S."/>
            <person name="Chain P."/>
            <person name="Malfatti S."/>
            <person name="Shin M."/>
            <person name="Vergez L."/>
            <person name="Schmutz J."/>
            <person name="Larimer F."/>
            <person name="Land M."/>
            <person name="Hauser L."/>
            <person name="Kyrpides N."/>
            <person name="Mikhailova N."/>
            <person name="Miller C."/>
            <person name="Richardson P."/>
        </authorList>
    </citation>
    <scope>NUCLEOTIDE SEQUENCE [LARGE SCALE GENOMIC DNA]</scope>
    <source>
        <strain>PYR-GCK</strain>
    </source>
</reference>
<proteinExistence type="inferred from homology"/>
<organism>
    <name type="scientific">Mycolicibacterium gilvum (strain PYR-GCK)</name>
    <name type="common">Mycobacterium gilvum (strain PYR-GCK)</name>
    <dbReference type="NCBI Taxonomy" id="350054"/>
    <lineage>
        <taxon>Bacteria</taxon>
        <taxon>Bacillati</taxon>
        <taxon>Actinomycetota</taxon>
        <taxon>Actinomycetes</taxon>
        <taxon>Mycobacteriales</taxon>
        <taxon>Mycobacteriaceae</taxon>
        <taxon>Mycolicibacterium</taxon>
    </lineage>
</organism>
<gene>
    <name evidence="1" type="primary">aroA</name>
    <name type="ordered locus">Mflv_4695</name>
</gene>
<feature type="chain" id="PRO_1000099723" description="3-phosphoshikimate 1-carboxyvinyltransferase">
    <location>
        <begin position="1"/>
        <end position="446"/>
    </location>
</feature>
<feature type="active site" description="Proton acceptor" evidence="1">
    <location>
        <position position="315"/>
    </location>
</feature>
<feature type="binding site" evidence="1">
    <location>
        <position position="26"/>
    </location>
    <ligand>
        <name>3-phosphoshikimate</name>
        <dbReference type="ChEBI" id="CHEBI:145989"/>
    </ligand>
</feature>
<feature type="binding site" evidence="1">
    <location>
        <position position="26"/>
    </location>
    <ligand>
        <name>phosphoenolpyruvate</name>
        <dbReference type="ChEBI" id="CHEBI:58702"/>
    </ligand>
</feature>
<feature type="binding site" evidence="1">
    <location>
        <position position="27"/>
    </location>
    <ligand>
        <name>3-phosphoshikimate</name>
        <dbReference type="ChEBI" id="CHEBI:145989"/>
    </ligand>
</feature>
<feature type="binding site" evidence="1">
    <location>
        <position position="31"/>
    </location>
    <ligand>
        <name>3-phosphoshikimate</name>
        <dbReference type="ChEBI" id="CHEBI:145989"/>
    </ligand>
</feature>
<feature type="binding site" evidence="1">
    <location>
        <position position="100"/>
    </location>
    <ligand>
        <name>phosphoenolpyruvate</name>
        <dbReference type="ChEBI" id="CHEBI:58702"/>
    </ligand>
</feature>
<feature type="binding site" evidence="1">
    <location>
        <position position="128"/>
    </location>
    <ligand>
        <name>phosphoenolpyruvate</name>
        <dbReference type="ChEBI" id="CHEBI:58702"/>
    </ligand>
</feature>
<feature type="binding site" evidence="1">
    <location>
        <position position="171"/>
    </location>
    <ligand>
        <name>3-phosphoshikimate</name>
        <dbReference type="ChEBI" id="CHEBI:145989"/>
    </ligand>
</feature>
<feature type="binding site" evidence="1">
    <location>
        <position position="172"/>
    </location>
    <ligand>
        <name>3-phosphoshikimate</name>
        <dbReference type="ChEBI" id="CHEBI:145989"/>
    </ligand>
</feature>
<feature type="binding site" evidence="1">
    <location>
        <position position="173"/>
    </location>
    <ligand>
        <name>3-phosphoshikimate</name>
        <dbReference type="ChEBI" id="CHEBI:145989"/>
    </ligand>
</feature>
<feature type="binding site" evidence="1">
    <location>
        <position position="173"/>
    </location>
    <ligand>
        <name>phosphoenolpyruvate</name>
        <dbReference type="ChEBI" id="CHEBI:58702"/>
    </ligand>
</feature>
<feature type="binding site" evidence="1">
    <location>
        <position position="200"/>
    </location>
    <ligand>
        <name>3-phosphoshikimate</name>
        <dbReference type="ChEBI" id="CHEBI:145989"/>
    </ligand>
</feature>
<feature type="binding site" evidence="1">
    <location>
        <position position="315"/>
    </location>
    <ligand>
        <name>3-phosphoshikimate</name>
        <dbReference type="ChEBI" id="CHEBI:145989"/>
    </ligand>
</feature>
<feature type="binding site" evidence="1">
    <location>
        <position position="344"/>
    </location>
    <ligand>
        <name>3-phosphoshikimate</name>
        <dbReference type="ChEBI" id="CHEBI:145989"/>
    </ligand>
</feature>
<feature type="binding site" evidence="1">
    <location>
        <position position="348"/>
    </location>
    <ligand>
        <name>phosphoenolpyruvate</name>
        <dbReference type="ChEBI" id="CHEBI:58702"/>
    </ligand>
</feature>
<feature type="binding site" evidence="1">
    <location>
        <position position="389"/>
    </location>
    <ligand>
        <name>phosphoenolpyruvate</name>
        <dbReference type="ChEBI" id="CHEBI:58702"/>
    </ligand>
</feature>
<feature type="binding site" evidence="1">
    <location>
        <position position="414"/>
    </location>
    <ligand>
        <name>phosphoenolpyruvate</name>
        <dbReference type="ChEBI" id="CHEBI:58702"/>
    </ligand>
</feature>